<feature type="chain" id="PRO_0000311204" description="Cytochrome c oxidase assembly protein CtaG">
    <location>
        <begin position="1"/>
        <end position="192"/>
    </location>
</feature>
<feature type="topological domain" description="Cytoplasmic" evidence="1">
    <location>
        <begin position="1"/>
        <end position="9"/>
    </location>
</feature>
<feature type="transmembrane region" description="Helical; Signal-anchor for type II membrane protein" evidence="1">
    <location>
        <begin position="10"/>
        <end position="30"/>
    </location>
</feature>
<feature type="topological domain" description="Periplasmic" evidence="1">
    <location>
        <begin position="31"/>
        <end position="192"/>
    </location>
</feature>
<reference key="1">
    <citation type="submission" date="2007-04" db="EMBL/GenBank/DDBJ databases">
        <title>Complete sequence of chromosome of Rhodobacter sphaeroides ATCC 17025.</title>
        <authorList>
            <consortium name="US DOE Joint Genome Institute"/>
            <person name="Copeland A."/>
            <person name="Lucas S."/>
            <person name="Lapidus A."/>
            <person name="Barry K."/>
            <person name="Detter J.C."/>
            <person name="Glavina del Rio T."/>
            <person name="Hammon N."/>
            <person name="Israni S."/>
            <person name="Dalin E."/>
            <person name="Tice H."/>
            <person name="Pitluck S."/>
            <person name="Chertkov O."/>
            <person name="Brettin T."/>
            <person name="Bruce D."/>
            <person name="Han C."/>
            <person name="Schmutz J."/>
            <person name="Larimer F."/>
            <person name="Land M."/>
            <person name="Hauser L."/>
            <person name="Kyrpides N."/>
            <person name="Kim E."/>
            <person name="Richardson P."/>
            <person name="Mackenzie C."/>
            <person name="Choudhary M."/>
            <person name="Donohue T.J."/>
            <person name="Kaplan S."/>
        </authorList>
    </citation>
    <scope>NUCLEOTIDE SEQUENCE [LARGE SCALE GENOMIC DNA]</scope>
    <source>
        <strain>ATCC 17025 / ATH 2.4.3</strain>
    </source>
</reference>
<name>COXZ_CERS5</name>
<sequence>MSLSPHQKTAGWLVGVVVVMGAASFAAVPFYDWFCRVTGFGGTTAVASEAPAEVLDRTIRVRFDASREAGMPWEFRPLQREMEVRIGETGLAFYEAYNPTDRTVAGTASYNVTPDAAGGYFAKIACFCFTEQVLAPGERVEMPVSFYVDPAIVKDRDGRYVRQITLSYTFHQTELPEEQAALAARPAGIDVN</sequence>
<organism>
    <name type="scientific">Cereibacter sphaeroides (strain ATCC 17025 / ATH 2.4.3)</name>
    <name type="common">Rhodobacter sphaeroides</name>
    <dbReference type="NCBI Taxonomy" id="349102"/>
    <lineage>
        <taxon>Bacteria</taxon>
        <taxon>Pseudomonadati</taxon>
        <taxon>Pseudomonadota</taxon>
        <taxon>Alphaproteobacteria</taxon>
        <taxon>Rhodobacterales</taxon>
        <taxon>Paracoccaceae</taxon>
        <taxon>Cereibacter</taxon>
    </lineage>
</organism>
<gene>
    <name evidence="1" type="primary">ctaG</name>
    <name type="ordered locus">Rsph17025_0617</name>
</gene>
<comment type="function">
    <text evidence="1">Exerts its effect at some terminal stage of cytochrome c oxidase synthesis, probably by being involved in the insertion of the copper B into subunit I.</text>
</comment>
<comment type="subcellular location">
    <subcellularLocation>
        <location evidence="1">Cell inner membrane</location>
        <topology evidence="1">Single-pass type II membrane protein</topology>
        <orientation evidence="1">Periplasmic side</orientation>
    </subcellularLocation>
</comment>
<comment type="similarity">
    <text evidence="1">Belongs to the COX11/CtaG family.</text>
</comment>
<dbReference type="EMBL" id="CP000661">
    <property type="protein sequence ID" value="ABP69523.1"/>
    <property type="molecule type" value="Genomic_DNA"/>
</dbReference>
<dbReference type="SMR" id="A4WQ59"/>
<dbReference type="STRING" id="349102.Rsph17025_0617"/>
<dbReference type="KEGG" id="rsq:Rsph17025_0617"/>
<dbReference type="eggNOG" id="COG3175">
    <property type="taxonomic scope" value="Bacteria"/>
</dbReference>
<dbReference type="HOGENOM" id="CLU_045000_5_0_5"/>
<dbReference type="BioCyc" id="RSPH349102:G1G8M-638-MONOMER"/>
<dbReference type="GO" id="GO:0005886">
    <property type="term" value="C:plasma membrane"/>
    <property type="evidence" value="ECO:0007669"/>
    <property type="project" value="UniProtKB-SubCell"/>
</dbReference>
<dbReference type="GO" id="GO:0005507">
    <property type="term" value="F:copper ion binding"/>
    <property type="evidence" value="ECO:0007669"/>
    <property type="project" value="InterPro"/>
</dbReference>
<dbReference type="GO" id="GO:0008535">
    <property type="term" value="P:respiratory chain complex IV assembly"/>
    <property type="evidence" value="ECO:0007669"/>
    <property type="project" value="UniProtKB-UniRule"/>
</dbReference>
<dbReference type="FunFam" id="2.60.370.10:FF:000001">
    <property type="entry name" value="COX11 cytochrome c oxidase assembly homolog"/>
    <property type="match status" value="1"/>
</dbReference>
<dbReference type="Gene3D" id="2.60.370.10">
    <property type="entry name" value="Ctag/Cox11"/>
    <property type="match status" value="1"/>
</dbReference>
<dbReference type="HAMAP" id="MF_00155">
    <property type="entry name" value="CtaG"/>
    <property type="match status" value="1"/>
</dbReference>
<dbReference type="InterPro" id="IPR023471">
    <property type="entry name" value="CtaG/Cox11_dom_sf"/>
</dbReference>
<dbReference type="InterPro" id="IPR007533">
    <property type="entry name" value="Cyt_c_oxidase_assmbl_CtaG"/>
</dbReference>
<dbReference type="NCBIfam" id="NF003465">
    <property type="entry name" value="PRK05089.1"/>
    <property type="match status" value="1"/>
</dbReference>
<dbReference type="PANTHER" id="PTHR21320:SF3">
    <property type="entry name" value="CYTOCHROME C OXIDASE ASSEMBLY PROTEIN COX11, MITOCHONDRIAL-RELATED"/>
    <property type="match status" value="1"/>
</dbReference>
<dbReference type="PANTHER" id="PTHR21320">
    <property type="entry name" value="CYTOCHROME C OXIDASE ASSEMBLY PROTEIN COX11-RELATED"/>
    <property type="match status" value="1"/>
</dbReference>
<dbReference type="Pfam" id="PF04442">
    <property type="entry name" value="CtaG_Cox11"/>
    <property type="match status" value="1"/>
</dbReference>
<dbReference type="PIRSF" id="PIRSF005413">
    <property type="entry name" value="COX11"/>
    <property type="match status" value="1"/>
</dbReference>
<dbReference type="SUPFAM" id="SSF110111">
    <property type="entry name" value="Ctag/Cox11"/>
    <property type="match status" value="1"/>
</dbReference>
<proteinExistence type="inferred from homology"/>
<keyword id="KW-0997">Cell inner membrane</keyword>
<keyword id="KW-1003">Cell membrane</keyword>
<keyword id="KW-0186">Copper</keyword>
<keyword id="KW-0472">Membrane</keyword>
<keyword id="KW-0735">Signal-anchor</keyword>
<keyword id="KW-0812">Transmembrane</keyword>
<keyword id="KW-1133">Transmembrane helix</keyword>
<accession>A4WQ59</accession>
<evidence type="ECO:0000255" key="1">
    <source>
        <dbReference type="HAMAP-Rule" id="MF_00155"/>
    </source>
</evidence>
<protein>
    <recommendedName>
        <fullName evidence="1">Cytochrome c oxidase assembly protein CtaG</fullName>
    </recommendedName>
</protein>